<organism>
    <name type="scientific">Haemophilus influenzae (strain ATCC 51907 / DSM 11121 / KW20 / Rd)</name>
    <dbReference type="NCBI Taxonomy" id="71421"/>
    <lineage>
        <taxon>Bacteria</taxon>
        <taxon>Pseudomonadati</taxon>
        <taxon>Pseudomonadota</taxon>
        <taxon>Gammaproteobacteria</taxon>
        <taxon>Pasteurellales</taxon>
        <taxon>Pasteurellaceae</taxon>
        <taxon>Haemophilus</taxon>
    </lineage>
</organism>
<name>SELB_HAEIN</name>
<proteinExistence type="inferred from homology"/>
<accession>P43927</accession>
<gene>
    <name type="primary">selB</name>
    <name type="ordered locus">HI_0709</name>
</gene>
<sequence>MIIVTSGHVDHGKTALLKALTGTSTAHLPEEKKRGMTIDLGYAYLPLENKVLGFIDVPGHEKFLSNMLAGLGGVHYAMLIVAADEGVAVQTKEHLAILRQLQFHEIIVVITKADRTNSAQIESLIQTIKQDYSFLRNANYFVTSAETGQGISELRHYLANLAELADTQKPFRYAIDRVFSVKGAGTVVTGTAFSGTVKVNDEIYLSTGQKIRIKAIHAQNTSSEQGIAGQRLALNLNADLDRTPMKRGDWLLQNEPLPPTDRISVQILAEVPLNESQPVHIYHGASRTTGKLTLLQGKNAAKNDRTLAEIILDSPLFLAFGDKLILRSGDTKTLIAGARVLEINSPKRHKRTEVRLNFLANLALAENASQRIALTLQHNATTARQLMWTEQLTSLQLDKALAERDAVRYQDWCFNPNYVQEKTQQILTALNIYHEQHNDQLGVSKARLYRMATLNQPENLIHHFIDEMLDDGRLQQTRGWIHLPEHKIQFNTEEKSRWTDVLNEFEKANGQAIWVRDMANALAIDESIMRNFMYKAGKLGYLTPIVKDRFFLTETLYAYARLIKQIAEEKGKVSVNEVRDKLNFGRKLTVQLMEYFDRMGFLRRKGNDHILRDKNVFDL</sequence>
<dbReference type="EMBL" id="L42023">
    <property type="protein sequence ID" value="AAC22366.1"/>
    <property type="molecule type" value="Genomic_DNA"/>
</dbReference>
<dbReference type="PIR" id="I64087">
    <property type="entry name" value="I64087"/>
</dbReference>
<dbReference type="RefSeq" id="NP_438867.1">
    <property type="nucleotide sequence ID" value="NC_000907.1"/>
</dbReference>
<dbReference type="SMR" id="P43927"/>
<dbReference type="STRING" id="71421.HI_0709"/>
<dbReference type="EnsemblBacteria" id="AAC22366">
    <property type="protein sequence ID" value="AAC22366"/>
    <property type="gene ID" value="HI_0709"/>
</dbReference>
<dbReference type="KEGG" id="hin:HI_0709"/>
<dbReference type="PATRIC" id="fig|71421.8.peg.739"/>
<dbReference type="eggNOG" id="COG3276">
    <property type="taxonomic scope" value="Bacteria"/>
</dbReference>
<dbReference type="HOGENOM" id="CLU_023030_2_0_6"/>
<dbReference type="OrthoDB" id="9803139at2"/>
<dbReference type="PhylomeDB" id="P43927"/>
<dbReference type="BioCyc" id="HINF71421:G1GJ1-743-MONOMER"/>
<dbReference type="Proteomes" id="UP000000579">
    <property type="component" value="Chromosome"/>
</dbReference>
<dbReference type="GO" id="GO:0005737">
    <property type="term" value="C:cytoplasm"/>
    <property type="evidence" value="ECO:0007669"/>
    <property type="project" value="UniProtKB-SubCell"/>
</dbReference>
<dbReference type="GO" id="GO:0005525">
    <property type="term" value="F:GTP binding"/>
    <property type="evidence" value="ECO:0007669"/>
    <property type="project" value="UniProtKB-KW"/>
</dbReference>
<dbReference type="GO" id="GO:0003924">
    <property type="term" value="F:GTPase activity"/>
    <property type="evidence" value="ECO:0007669"/>
    <property type="project" value="InterPro"/>
</dbReference>
<dbReference type="GO" id="GO:0097216">
    <property type="term" value="F:guanosine tetraphosphate binding"/>
    <property type="evidence" value="ECO:0007669"/>
    <property type="project" value="UniProtKB-ARBA"/>
</dbReference>
<dbReference type="GO" id="GO:0035368">
    <property type="term" value="F:selenocysteine insertion sequence binding"/>
    <property type="evidence" value="ECO:0000318"/>
    <property type="project" value="GO_Central"/>
</dbReference>
<dbReference type="GO" id="GO:0003746">
    <property type="term" value="F:translation elongation factor activity"/>
    <property type="evidence" value="ECO:0007669"/>
    <property type="project" value="InterPro"/>
</dbReference>
<dbReference type="GO" id="GO:0001514">
    <property type="term" value="P:selenocysteine incorporation"/>
    <property type="evidence" value="ECO:0000318"/>
    <property type="project" value="GO_Central"/>
</dbReference>
<dbReference type="GO" id="GO:0016259">
    <property type="term" value="P:selenocysteine metabolic process"/>
    <property type="evidence" value="ECO:0000318"/>
    <property type="project" value="GO_Central"/>
</dbReference>
<dbReference type="CDD" id="cd04450">
    <property type="entry name" value="DEP_RGS7-like"/>
    <property type="match status" value="1"/>
</dbReference>
<dbReference type="CDD" id="cd04171">
    <property type="entry name" value="SelB"/>
    <property type="match status" value="1"/>
</dbReference>
<dbReference type="CDD" id="cd03696">
    <property type="entry name" value="SelB_II"/>
    <property type="match status" value="1"/>
</dbReference>
<dbReference type="CDD" id="cd15491">
    <property type="entry name" value="selB_III"/>
    <property type="match status" value="1"/>
</dbReference>
<dbReference type="FunFam" id="1.10.10.10:FF:000350">
    <property type="entry name" value="Selenocysteine-specific translation elongation factor"/>
    <property type="match status" value="1"/>
</dbReference>
<dbReference type="Gene3D" id="3.40.50.300">
    <property type="entry name" value="P-loop containing nucleotide triphosphate hydrolases"/>
    <property type="match status" value="1"/>
</dbReference>
<dbReference type="Gene3D" id="2.40.30.10">
    <property type="entry name" value="Translation factors"/>
    <property type="match status" value="1"/>
</dbReference>
<dbReference type="Gene3D" id="1.10.10.10">
    <property type="entry name" value="Winged helix-like DNA-binding domain superfamily/Winged helix DNA-binding domain"/>
    <property type="match status" value="2"/>
</dbReference>
<dbReference type="InterPro" id="IPR050055">
    <property type="entry name" value="EF-Tu_GTPase"/>
</dbReference>
<dbReference type="InterPro" id="IPR004161">
    <property type="entry name" value="EFTu-like_2"/>
</dbReference>
<dbReference type="InterPro" id="IPR015190">
    <property type="entry name" value="Elong_fac_SelB-wing-hlx_typ-2"/>
</dbReference>
<dbReference type="InterPro" id="IPR027417">
    <property type="entry name" value="P-loop_NTPase"/>
</dbReference>
<dbReference type="InterPro" id="IPR048931">
    <property type="entry name" value="SelB_WH_3rd"/>
</dbReference>
<dbReference type="InterPro" id="IPR015191">
    <property type="entry name" value="SelB_WHD4"/>
</dbReference>
<dbReference type="InterPro" id="IPR005225">
    <property type="entry name" value="Small_GTP-bd"/>
</dbReference>
<dbReference type="InterPro" id="IPR000795">
    <property type="entry name" value="T_Tr_GTP-bd_dom"/>
</dbReference>
<dbReference type="InterPro" id="IPR009000">
    <property type="entry name" value="Transl_B-barrel_sf"/>
</dbReference>
<dbReference type="InterPro" id="IPR009001">
    <property type="entry name" value="Transl_elong_EF1A/Init_IF2_C"/>
</dbReference>
<dbReference type="InterPro" id="IPR004535">
    <property type="entry name" value="Transl_elong_SelB"/>
</dbReference>
<dbReference type="InterPro" id="IPR036388">
    <property type="entry name" value="WH-like_DNA-bd_sf"/>
</dbReference>
<dbReference type="InterPro" id="IPR036390">
    <property type="entry name" value="WH_DNA-bd_sf"/>
</dbReference>
<dbReference type="NCBIfam" id="TIGR00475">
    <property type="entry name" value="selB"/>
    <property type="match status" value="1"/>
</dbReference>
<dbReference type="NCBIfam" id="TIGR00231">
    <property type="entry name" value="small_GTP"/>
    <property type="match status" value="1"/>
</dbReference>
<dbReference type="PANTHER" id="PTHR43721:SF22">
    <property type="entry name" value="ELONGATION FACTOR TU, MITOCHONDRIAL"/>
    <property type="match status" value="1"/>
</dbReference>
<dbReference type="PANTHER" id="PTHR43721">
    <property type="entry name" value="ELONGATION FACTOR TU-RELATED"/>
    <property type="match status" value="1"/>
</dbReference>
<dbReference type="Pfam" id="PF25461">
    <property type="entry name" value="Beta-barrel_SelB"/>
    <property type="match status" value="1"/>
</dbReference>
<dbReference type="Pfam" id="PF00009">
    <property type="entry name" value="GTP_EFTU"/>
    <property type="match status" value="1"/>
</dbReference>
<dbReference type="Pfam" id="PF03144">
    <property type="entry name" value="GTP_EFTU_D2"/>
    <property type="match status" value="1"/>
</dbReference>
<dbReference type="Pfam" id="PF09106">
    <property type="entry name" value="SelB-wing_2"/>
    <property type="match status" value="1"/>
</dbReference>
<dbReference type="Pfam" id="PF09107">
    <property type="entry name" value="SelB-wing_3"/>
    <property type="match status" value="1"/>
</dbReference>
<dbReference type="Pfam" id="PF21214">
    <property type="entry name" value="SelB_WH_2nd_bact"/>
    <property type="match status" value="1"/>
</dbReference>
<dbReference type="SUPFAM" id="SSF50465">
    <property type="entry name" value="EF-Tu/eEF-1alpha/eIF2-gamma C-terminal domain"/>
    <property type="match status" value="1"/>
</dbReference>
<dbReference type="SUPFAM" id="SSF52540">
    <property type="entry name" value="P-loop containing nucleoside triphosphate hydrolases"/>
    <property type="match status" value="1"/>
</dbReference>
<dbReference type="SUPFAM" id="SSF50447">
    <property type="entry name" value="Translation proteins"/>
    <property type="match status" value="1"/>
</dbReference>
<dbReference type="SUPFAM" id="SSF46785">
    <property type="entry name" value="Winged helix' DNA-binding domain"/>
    <property type="match status" value="2"/>
</dbReference>
<dbReference type="PROSITE" id="PS51722">
    <property type="entry name" value="G_TR_2"/>
    <property type="match status" value="1"/>
</dbReference>
<keyword id="KW-0963">Cytoplasm</keyword>
<keyword id="KW-0342">GTP-binding</keyword>
<keyword id="KW-0547">Nucleotide-binding</keyword>
<keyword id="KW-0648">Protein biosynthesis</keyword>
<keyword id="KW-1185">Reference proteome</keyword>
<reference key="1">
    <citation type="journal article" date="1995" name="Science">
        <title>Whole-genome random sequencing and assembly of Haemophilus influenzae Rd.</title>
        <authorList>
            <person name="Fleischmann R.D."/>
            <person name="Adams M.D."/>
            <person name="White O."/>
            <person name="Clayton R.A."/>
            <person name="Kirkness E.F."/>
            <person name="Kerlavage A.R."/>
            <person name="Bult C.J."/>
            <person name="Tomb J.-F."/>
            <person name="Dougherty B.A."/>
            <person name="Merrick J.M."/>
            <person name="McKenney K."/>
            <person name="Sutton G.G."/>
            <person name="FitzHugh W."/>
            <person name="Fields C.A."/>
            <person name="Gocayne J.D."/>
            <person name="Scott J.D."/>
            <person name="Shirley R."/>
            <person name="Liu L.-I."/>
            <person name="Glodek A."/>
            <person name="Kelley J.M."/>
            <person name="Weidman J.F."/>
            <person name="Phillips C.A."/>
            <person name="Spriggs T."/>
            <person name="Hedblom E."/>
            <person name="Cotton M.D."/>
            <person name="Utterback T.R."/>
            <person name="Hanna M.C."/>
            <person name="Nguyen D.T."/>
            <person name="Saudek D.M."/>
            <person name="Brandon R.C."/>
            <person name="Fine L.D."/>
            <person name="Fritchman J.L."/>
            <person name="Fuhrmann J.L."/>
            <person name="Geoghagen N.S.M."/>
            <person name="Gnehm C.L."/>
            <person name="McDonald L.A."/>
            <person name="Small K.V."/>
            <person name="Fraser C.M."/>
            <person name="Smith H.O."/>
            <person name="Venter J.C."/>
        </authorList>
    </citation>
    <scope>NUCLEOTIDE SEQUENCE [LARGE SCALE GENOMIC DNA]</scope>
    <source>
        <strain>ATCC 51907 / DSM 11121 / KW20 / Rd</strain>
    </source>
</reference>
<protein>
    <recommendedName>
        <fullName>Selenocysteine-specific elongation factor</fullName>
    </recommendedName>
    <alternativeName>
        <fullName>SelB translation factor</fullName>
    </alternativeName>
</protein>
<comment type="function">
    <text evidence="1">Translation factor necessary for the incorporation of selenocysteine into proteins. It probably replaces EF-Tu for the insertion of selenocysteine directed by the UGA codon. SelB binds GTP and GDP (By similarity).</text>
</comment>
<comment type="subcellular location">
    <subcellularLocation>
        <location>Cytoplasm</location>
    </subcellularLocation>
</comment>
<comment type="similarity">
    <text evidence="2">Belongs to the TRAFAC class translation factor GTPase superfamily. Classic translation factor GTPase family. SelB subfamily.</text>
</comment>
<evidence type="ECO:0000250" key="1"/>
<evidence type="ECO:0000255" key="2">
    <source>
        <dbReference type="PROSITE-ProRule" id="PRU01059"/>
    </source>
</evidence>
<feature type="chain" id="PRO_0000091475" description="Selenocysteine-specific elongation factor">
    <location>
        <begin position="1"/>
        <end position="619"/>
    </location>
</feature>
<feature type="domain" description="tr-type G" evidence="2">
    <location>
        <begin position="1"/>
        <end position="169"/>
    </location>
</feature>
<feature type="region of interest" description="G1" evidence="2">
    <location>
        <begin position="7"/>
        <end position="14"/>
    </location>
</feature>
<feature type="region of interest" description="G2" evidence="2">
    <location>
        <begin position="35"/>
        <end position="39"/>
    </location>
</feature>
<feature type="region of interest" description="G3" evidence="2">
    <location>
        <begin position="56"/>
        <end position="59"/>
    </location>
</feature>
<feature type="region of interest" description="G4" evidence="2">
    <location>
        <begin position="111"/>
        <end position="114"/>
    </location>
</feature>
<feature type="region of interest" description="G5" evidence="2">
    <location>
        <begin position="144"/>
        <end position="146"/>
    </location>
</feature>
<feature type="binding site" evidence="1">
    <location>
        <begin position="7"/>
        <end position="14"/>
    </location>
    <ligand>
        <name>GTP</name>
        <dbReference type="ChEBI" id="CHEBI:37565"/>
    </ligand>
</feature>
<feature type="binding site" evidence="1">
    <location>
        <begin position="56"/>
        <end position="60"/>
    </location>
    <ligand>
        <name>GTP</name>
        <dbReference type="ChEBI" id="CHEBI:37565"/>
    </ligand>
</feature>
<feature type="binding site" evidence="1">
    <location>
        <begin position="111"/>
        <end position="114"/>
    </location>
    <ligand>
        <name>GTP</name>
        <dbReference type="ChEBI" id="CHEBI:37565"/>
    </ligand>
</feature>